<dbReference type="EMBL" id="EF025586">
    <property type="protein sequence ID" value="ABK30936.1"/>
    <property type="molecule type" value="mRNA"/>
</dbReference>
<dbReference type="EMBL" id="AL136703">
    <property type="protein sequence ID" value="CAB66638.1"/>
    <property type="molecule type" value="mRNA"/>
</dbReference>
<dbReference type="EMBL" id="AK314598">
    <property type="protein sequence ID" value="BAG37169.1"/>
    <property type="molecule type" value="mRNA"/>
</dbReference>
<dbReference type="EMBL" id="AK223541">
    <property type="protein sequence ID" value="BAD97261.1"/>
    <property type="molecule type" value="mRNA"/>
</dbReference>
<dbReference type="EMBL" id="AC104698">
    <property type="protein sequence ID" value="AAY24349.1"/>
    <property type="molecule type" value="Genomic_DNA"/>
</dbReference>
<dbReference type="EMBL" id="BC109376">
    <property type="protein sequence ID" value="AAI09377.1"/>
    <property type="molecule type" value="mRNA"/>
</dbReference>
<dbReference type="EMBL" id="BC126434">
    <property type="protein sequence ID" value="AAI26435.1"/>
    <property type="molecule type" value="mRNA"/>
</dbReference>
<dbReference type="EMBL" id="BC130415">
    <property type="protein sequence ID" value="AAI30416.1"/>
    <property type="molecule type" value="mRNA"/>
</dbReference>
<dbReference type="CCDS" id="CCDS33173.1"/>
<dbReference type="RefSeq" id="NP_112177.2">
    <property type="nucleotide sequence ID" value="NM_030915.4"/>
</dbReference>
<dbReference type="BioGRID" id="123543">
    <property type="interactions" value="22"/>
</dbReference>
<dbReference type="FunCoup" id="Q53QV2">
    <property type="interactions" value="583"/>
</dbReference>
<dbReference type="IntAct" id="Q53QV2">
    <property type="interactions" value="20"/>
</dbReference>
<dbReference type="MINT" id="Q53QV2"/>
<dbReference type="STRING" id="9606.ENSP00000378733"/>
<dbReference type="iPTMnet" id="Q53QV2"/>
<dbReference type="PhosphoSitePlus" id="Q53QV2"/>
<dbReference type="BioMuta" id="LBH"/>
<dbReference type="jPOST" id="Q53QV2"/>
<dbReference type="MassIVE" id="Q53QV2"/>
<dbReference type="PaxDb" id="9606-ENSP00000378733"/>
<dbReference type="PeptideAtlas" id="Q53QV2"/>
<dbReference type="ProteomicsDB" id="62511"/>
<dbReference type="Pumba" id="Q53QV2"/>
<dbReference type="Antibodypedia" id="28981">
    <property type="antibodies" value="85 antibodies from 15 providers"/>
</dbReference>
<dbReference type="DNASU" id="81606"/>
<dbReference type="Ensembl" id="ENST00000395323.9">
    <property type="protein sequence ID" value="ENSP00000378733.3"/>
    <property type="gene ID" value="ENSG00000213626.13"/>
</dbReference>
<dbReference type="GeneID" id="81606"/>
<dbReference type="KEGG" id="hsa:81606"/>
<dbReference type="MANE-Select" id="ENST00000395323.9">
    <property type="protein sequence ID" value="ENSP00000378733.3"/>
    <property type="RefSeq nucleotide sequence ID" value="NM_030915.4"/>
    <property type="RefSeq protein sequence ID" value="NP_112177.2"/>
</dbReference>
<dbReference type="UCSC" id="uc002rne.3">
    <property type="organism name" value="human"/>
</dbReference>
<dbReference type="AGR" id="HGNC:29532"/>
<dbReference type="CTD" id="81606"/>
<dbReference type="DisGeNET" id="81606"/>
<dbReference type="GeneCards" id="LBH"/>
<dbReference type="HGNC" id="HGNC:29532">
    <property type="gene designation" value="LBH"/>
</dbReference>
<dbReference type="HPA" id="ENSG00000213626">
    <property type="expression patterns" value="Low tissue specificity"/>
</dbReference>
<dbReference type="MIM" id="611763">
    <property type="type" value="gene"/>
</dbReference>
<dbReference type="neXtProt" id="NX_Q53QV2"/>
<dbReference type="OpenTargets" id="ENSG00000213626"/>
<dbReference type="PharmGKB" id="PA162393798"/>
<dbReference type="VEuPathDB" id="HostDB:ENSG00000213626"/>
<dbReference type="eggNOG" id="ENOG502S1QG">
    <property type="taxonomic scope" value="Eukaryota"/>
</dbReference>
<dbReference type="GeneTree" id="ENSGT00390000009189"/>
<dbReference type="InParanoid" id="Q53QV2"/>
<dbReference type="OMA" id="VFFPIHC"/>
<dbReference type="OrthoDB" id="8937789at2759"/>
<dbReference type="PAN-GO" id="Q53QV2">
    <property type="GO annotations" value="2 GO annotations based on evolutionary models"/>
</dbReference>
<dbReference type="PhylomeDB" id="Q53QV2"/>
<dbReference type="TreeFam" id="TF332770"/>
<dbReference type="PathwayCommons" id="Q53QV2"/>
<dbReference type="SignaLink" id="Q53QV2"/>
<dbReference type="BioGRID-ORCS" id="81606">
    <property type="hits" value="14 hits in 1163 CRISPR screens"/>
</dbReference>
<dbReference type="ChiTaRS" id="LBH">
    <property type="organism name" value="human"/>
</dbReference>
<dbReference type="GeneWiki" id="LBH"/>
<dbReference type="GenomeRNAi" id="81606"/>
<dbReference type="Pharos" id="Q53QV2">
    <property type="development level" value="Tbio"/>
</dbReference>
<dbReference type="PRO" id="PR:Q53QV2"/>
<dbReference type="Proteomes" id="UP000005640">
    <property type="component" value="Chromosome 2"/>
</dbReference>
<dbReference type="RNAct" id="Q53QV2">
    <property type="molecule type" value="protein"/>
</dbReference>
<dbReference type="Bgee" id="ENSG00000213626">
    <property type="expression patterns" value="Expressed in right lung and 189 other cell types or tissues"/>
</dbReference>
<dbReference type="ExpressionAtlas" id="Q53QV2">
    <property type="expression patterns" value="baseline and differential"/>
</dbReference>
<dbReference type="GO" id="GO:0005737">
    <property type="term" value="C:cytoplasm"/>
    <property type="evidence" value="ECO:0000314"/>
    <property type="project" value="UniProtKB"/>
</dbReference>
<dbReference type="GO" id="GO:0005634">
    <property type="term" value="C:nucleus"/>
    <property type="evidence" value="ECO:0000314"/>
    <property type="project" value="UniProtKB"/>
</dbReference>
<dbReference type="GO" id="GO:0032991">
    <property type="term" value="C:protein-containing complex"/>
    <property type="evidence" value="ECO:0000314"/>
    <property type="project" value="UniProtKB"/>
</dbReference>
<dbReference type="GO" id="GO:0060644">
    <property type="term" value="P:mammary gland epithelial cell differentiation"/>
    <property type="evidence" value="ECO:0007669"/>
    <property type="project" value="Ensembl"/>
</dbReference>
<dbReference type="GO" id="GO:0045892">
    <property type="term" value="P:negative regulation of DNA-templated transcription"/>
    <property type="evidence" value="ECO:0000314"/>
    <property type="project" value="UniProtKB"/>
</dbReference>
<dbReference type="GO" id="GO:0033147">
    <property type="term" value="P:negative regulation of intracellular estrogen receptor signaling pathway"/>
    <property type="evidence" value="ECO:0007669"/>
    <property type="project" value="Ensembl"/>
</dbReference>
<dbReference type="GO" id="GO:2000737">
    <property type="term" value="P:negative regulation of stem cell differentiation"/>
    <property type="evidence" value="ECO:0007669"/>
    <property type="project" value="Ensembl"/>
</dbReference>
<dbReference type="GO" id="GO:0045893">
    <property type="term" value="P:positive regulation of DNA-templated transcription"/>
    <property type="evidence" value="ECO:0000314"/>
    <property type="project" value="UniProtKB"/>
</dbReference>
<dbReference type="GO" id="GO:2000103">
    <property type="term" value="P:positive regulation of mammary stem cell proliferation"/>
    <property type="evidence" value="ECO:0007669"/>
    <property type="project" value="Ensembl"/>
</dbReference>
<dbReference type="GO" id="GO:1904677">
    <property type="term" value="P:positive regulation of somatic stem cell division"/>
    <property type="evidence" value="ECO:0007669"/>
    <property type="project" value="Ensembl"/>
</dbReference>
<dbReference type="GO" id="GO:1904674">
    <property type="term" value="P:positive regulation of somatic stem cell population maintenance"/>
    <property type="evidence" value="ECO:0007669"/>
    <property type="project" value="Ensembl"/>
</dbReference>
<dbReference type="GO" id="GO:0043408">
    <property type="term" value="P:regulation of MAPK cascade"/>
    <property type="evidence" value="ECO:0000315"/>
    <property type="project" value="UniProtKB"/>
</dbReference>
<dbReference type="InterPro" id="IPR013294">
    <property type="entry name" value="LBH"/>
</dbReference>
<dbReference type="InterPro" id="IPR038990">
    <property type="entry name" value="LBH_dom"/>
</dbReference>
<dbReference type="InterPro" id="IPR042945">
    <property type="entry name" value="LBH_dom_prot"/>
</dbReference>
<dbReference type="PANTHER" id="PTHR14987:SF2">
    <property type="entry name" value="PROTEIN LBH"/>
    <property type="match status" value="1"/>
</dbReference>
<dbReference type="PANTHER" id="PTHR14987">
    <property type="entry name" value="PROTEIN LBH-RELATED"/>
    <property type="match status" value="1"/>
</dbReference>
<dbReference type="Pfam" id="PF15317">
    <property type="entry name" value="Lbh"/>
    <property type="match status" value="1"/>
</dbReference>
<dbReference type="PIRSF" id="PIRSF008130">
    <property type="entry name" value="LBH"/>
    <property type="match status" value="1"/>
</dbReference>
<dbReference type="PRINTS" id="PR01881">
    <property type="entry name" value="LBHPROTEIN"/>
</dbReference>
<sequence length="105" mass="12217">MSIYFPIHCPDYLRSAKMTEVMMNTQPMEEIGLSPRKDGLSYQIFPDPSDFDRCCKLKDRLPSIVVEPTEGEVESGELRWPPEEFLVQEDEQDNCEETAKENKEQ</sequence>
<accession>Q53QV2</accession>
<accession>B2RBC2</accession>
<accession>Q9H0Q1</accession>
<protein>
    <recommendedName>
        <fullName evidence="5">Protein LBH</fullName>
        <shortName evidence="4">hLBH</shortName>
    </recommendedName>
    <alternativeName>
        <fullName evidence="5">Limb bud and heart development protein homolog</fullName>
    </alternativeName>
</protein>
<feature type="chain" id="PRO_0000324802" description="Protein LBH">
    <location>
        <begin position="1"/>
        <end position="105"/>
    </location>
</feature>
<feature type="domain" description="LBH" evidence="1">
    <location>
        <begin position="18"/>
        <end position="104"/>
    </location>
</feature>
<feature type="region of interest" description="Disordered" evidence="2">
    <location>
        <begin position="86"/>
        <end position="105"/>
    </location>
</feature>
<feature type="compositionally biased region" description="Acidic residues" evidence="2">
    <location>
        <begin position="86"/>
        <end position="96"/>
    </location>
</feature>
<feature type="modified residue" description="Phosphoserine" evidence="7 8">
    <location>
        <position position="63"/>
    </location>
</feature>
<feature type="sequence conflict" description="In Ref. 1; ABK30936 and 2; CAB66638." evidence="5" ref="1 2">
    <original>C</original>
    <variation>R</variation>
    <location>
        <position position="54"/>
    </location>
</feature>
<name>LBH_HUMAN</name>
<keyword id="KW-0963">Cytoplasm</keyword>
<keyword id="KW-0217">Developmental protein</keyword>
<keyword id="KW-0539">Nucleus</keyword>
<keyword id="KW-0597">Phosphoprotein</keyword>
<keyword id="KW-1267">Proteomics identification</keyword>
<keyword id="KW-1185">Reference proteome</keyword>
<keyword id="KW-0804">Transcription</keyword>
<keyword id="KW-0805">Transcription regulation</keyword>
<organism>
    <name type="scientific">Homo sapiens</name>
    <name type="common">Human</name>
    <dbReference type="NCBI Taxonomy" id="9606"/>
    <lineage>
        <taxon>Eukaryota</taxon>
        <taxon>Metazoa</taxon>
        <taxon>Chordata</taxon>
        <taxon>Craniata</taxon>
        <taxon>Vertebrata</taxon>
        <taxon>Euteleostomi</taxon>
        <taxon>Mammalia</taxon>
        <taxon>Eutheria</taxon>
        <taxon>Euarchontoglires</taxon>
        <taxon>Primates</taxon>
        <taxon>Haplorrhini</taxon>
        <taxon>Catarrhini</taxon>
        <taxon>Hominidae</taxon>
        <taxon>Homo</taxon>
    </lineage>
</organism>
<reference key="1">
    <citation type="journal article" date="2008" name="Mol. Biol. Rep.">
        <title>A human homolog of mouse Lbh gene, hLBH, expresses in heart and activates SRE and AP-1 mediated MAPK signaling pathway.</title>
        <authorList>
            <person name="Ai J."/>
            <person name="Wang Y."/>
            <person name="Tan K."/>
            <person name="Deng Y."/>
            <person name="Luo N."/>
            <person name="Yuan W."/>
            <person name="Wang Z."/>
            <person name="Li Y."/>
            <person name="Wang Y."/>
            <person name="Mo X."/>
            <person name="Zhu C."/>
            <person name="Yin Z."/>
            <person name="Liu M."/>
            <person name="Wu X."/>
        </authorList>
    </citation>
    <scope>NUCLEOTIDE SEQUENCE [MRNA]</scope>
    <scope>TISSUE SPECIFICITY</scope>
    <scope>DEVELOPMENTAL STAGE</scope>
    <scope>SUBCELLULAR LOCATION</scope>
    <scope>FUNCTION</scope>
    <source>
        <tissue>Embryonic heart</tissue>
    </source>
</reference>
<reference key="2">
    <citation type="journal article" date="2001" name="Genome Res.">
        <title>Towards a catalog of human genes and proteins: sequencing and analysis of 500 novel complete protein coding human cDNAs.</title>
        <authorList>
            <person name="Wiemann S."/>
            <person name="Weil B."/>
            <person name="Wellenreuther R."/>
            <person name="Gassenhuber J."/>
            <person name="Glassl S."/>
            <person name="Ansorge W."/>
            <person name="Boecher M."/>
            <person name="Bloecker H."/>
            <person name="Bauersachs S."/>
            <person name="Blum H."/>
            <person name="Lauber J."/>
            <person name="Duesterhoeft A."/>
            <person name="Beyer A."/>
            <person name="Koehrer K."/>
            <person name="Strack N."/>
            <person name="Mewes H.-W."/>
            <person name="Ottenwaelder B."/>
            <person name="Obermaier B."/>
            <person name="Tampe J."/>
            <person name="Heubner D."/>
            <person name="Wambutt R."/>
            <person name="Korn B."/>
            <person name="Klein M."/>
            <person name="Poustka A."/>
        </authorList>
    </citation>
    <scope>NUCLEOTIDE SEQUENCE [LARGE SCALE MRNA]</scope>
    <source>
        <tissue>Kidney</tissue>
    </source>
</reference>
<reference key="3">
    <citation type="journal article" date="2004" name="Nat. Genet.">
        <title>Complete sequencing and characterization of 21,243 full-length human cDNAs.</title>
        <authorList>
            <person name="Ota T."/>
            <person name="Suzuki Y."/>
            <person name="Nishikawa T."/>
            <person name="Otsuki T."/>
            <person name="Sugiyama T."/>
            <person name="Irie R."/>
            <person name="Wakamatsu A."/>
            <person name="Hayashi K."/>
            <person name="Sato H."/>
            <person name="Nagai K."/>
            <person name="Kimura K."/>
            <person name="Makita H."/>
            <person name="Sekine M."/>
            <person name="Obayashi M."/>
            <person name="Nishi T."/>
            <person name="Shibahara T."/>
            <person name="Tanaka T."/>
            <person name="Ishii S."/>
            <person name="Yamamoto J."/>
            <person name="Saito K."/>
            <person name="Kawai Y."/>
            <person name="Isono Y."/>
            <person name="Nakamura Y."/>
            <person name="Nagahari K."/>
            <person name="Murakami K."/>
            <person name="Yasuda T."/>
            <person name="Iwayanagi T."/>
            <person name="Wagatsuma M."/>
            <person name="Shiratori A."/>
            <person name="Sudo H."/>
            <person name="Hosoiri T."/>
            <person name="Kaku Y."/>
            <person name="Kodaira H."/>
            <person name="Kondo H."/>
            <person name="Sugawara M."/>
            <person name="Takahashi M."/>
            <person name="Kanda K."/>
            <person name="Yokoi T."/>
            <person name="Furuya T."/>
            <person name="Kikkawa E."/>
            <person name="Omura Y."/>
            <person name="Abe K."/>
            <person name="Kamihara K."/>
            <person name="Katsuta N."/>
            <person name="Sato K."/>
            <person name="Tanikawa M."/>
            <person name="Yamazaki M."/>
            <person name="Ninomiya K."/>
            <person name="Ishibashi T."/>
            <person name="Yamashita H."/>
            <person name="Murakawa K."/>
            <person name="Fujimori K."/>
            <person name="Tanai H."/>
            <person name="Kimata M."/>
            <person name="Watanabe M."/>
            <person name="Hiraoka S."/>
            <person name="Chiba Y."/>
            <person name="Ishida S."/>
            <person name="Ono Y."/>
            <person name="Takiguchi S."/>
            <person name="Watanabe S."/>
            <person name="Yosida M."/>
            <person name="Hotuta T."/>
            <person name="Kusano J."/>
            <person name="Kanehori K."/>
            <person name="Takahashi-Fujii A."/>
            <person name="Hara H."/>
            <person name="Tanase T.-O."/>
            <person name="Nomura Y."/>
            <person name="Togiya S."/>
            <person name="Komai F."/>
            <person name="Hara R."/>
            <person name="Takeuchi K."/>
            <person name="Arita M."/>
            <person name="Imose N."/>
            <person name="Musashino K."/>
            <person name="Yuuki H."/>
            <person name="Oshima A."/>
            <person name="Sasaki N."/>
            <person name="Aotsuka S."/>
            <person name="Yoshikawa Y."/>
            <person name="Matsunawa H."/>
            <person name="Ichihara T."/>
            <person name="Shiohata N."/>
            <person name="Sano S."/>
            <person name="Moriya S."/>
            <person name="Momiyama H."/>
            <person name="Satoh N."/>
            <person name="Takami S."/>
            <person name="Terashima Y."/>
            <person name="Suzuki O."/>
            <person name="Nakagawa S."/>
            <person name="Senoh A."/>
            <person name="Mizoguchi H."/>
            <person name="Goto Y."/>
            <person name="Shimizu F."/>
            <person name="Wakebe H."/>
            <person name="Hishigaki H."/>
            <person name="Watanabe T."/>
            <person name="Sugiyama A."/>
            <person name="Takemoto M."/>
            <person name="Kawakami B."/>
            <person name="Yamazaki M."/>
            <person name="Watanabe K."/>
            <person name="Kumagai A."/>
            <person name="Itakura S."/>
            <person name="Fukuzumi Y."/>
            <person name="Fujimori Y."/>
            <person name="Komiyama M."/>
            <person name="Tashiro H."/>
            <person name="Tanigami A."/>
            <person name="Fujiwara T."/>
            <person name="Ono T."/>
            <person name="Yamada K."/>
            <person name="Fujii Y."/>
            <person name="Ozaki K."/>
            <person name="Hirao M."/>
            <person name="Ohmori Y."/>
            <person name="Kawabata A."/>
            <person name="Hikiji T."/>
            <person name="Kobatake N."/>
            <person name="Inagaki H."/>
            <person name="Ikema Y."/>
            <person name="Okamoto S."/>
            <person name="Okitani R."/>
            <person name="Kawakami T."/>
            <person name="Noguchi S."/>
            <person name="Itoh T."/>
            <person name="Shigeta K."/>
            <person name="Senba T."/>
            <person name="Matsumura K."/>
            <person name="Nakajima Y."/>
            <person name="Mizuno T."/>
            <person name="Morinaga M."/>
            <person name="Sasaki M."/>
            <person name="Togashi T."/>
            <person name="Oyama M."/>
            <person name="Hata H."/>
            <person name="Watanabe M."/>
            <person name="Komatsu T."/>
            <person name="Mizushima-Sugano J."/>
            <person name="Satoh T."/>
            <person name="Shirai Y."/>
            <person name="Takahashi Y."/>
            <person name="Nakagawa K."/>
            <person name="Okumura K."/>
            <person name="Nagase T."/>
            <person name="Nomura N."/>
            <person name="Kikuchi H."/>
            <person name="Masuho Y."/>
            <person name="Yamashita R."/>
            <person name="Nakai K."/>
            <person name="Yada T."/>
            <person name="Nakamura Y."/>
            <person name="Ohara O."/>
            <person name="Isogai T."/>
            <person name="Sugano S."/>
        </authorList>
    </citation>
    <scope>NUCLEOTIDE SEQUENCE [LARGE SCALE MRNA]</scope>
    <source>
        <tissue>Placenta</tissue>
    </source>
</reference>
<reference key="4">
    <citation type="submission" date="2005-04" db="EMBL/GenBank/DDBJ databases">
        <authorList>
            <person name="Totoki Y."/>
            <person name="Toyoda A."/>
            <person name="Takeda T."/>
            <person name="Sakaki Y."/>
            <person name="Tanaka A."/>
            <person name="Yokoyama S."/>
        </authorList>
    </citation>
    <scope>NUCLEOTIDE SEQUENCE [LARGE SCALE MRNA]</scope>
    <source>
        <tissue>Kidney</tissue>
    </source>
</reference>
<reference key="5">
    <citation type="journal article" date="2005" name="Nature">
        <title>Generation and annotation of the DNA sequences of human chromosomes 2 and 4.</title>
        <authorList>
            <person name="Hillier L.W."/>
            <person name="Graves T.A."/>
            <person name="Fulton R.S."/>
            <person name="Fulton L.A."/>
            <person name="Pepin K.H."/>
            <person name="Minx P."/>
            <person name="Wagner-McPherson C."/>
            <person name="Layman D."/>
            <person name="Wylie K."/>
            <person name="Sekhon M."/>
            <person name="Becker M.C."/>
            <person name="Fewell G.A."/>
            <person name="Delehaunty K.D."/>
            <person name="Miner T.L."/>
            <person name="Nash W.E."/>
            <person name="Kremitzki C."/>
            <person name="Oddy L."/>
            <person name="Du H."/>
            <person name="Sun H."/>
            <person name="Bradshaw-Cordum H."/>
            <person name="Ali J."/>
            <person name="Carter J."/>
            <person name="Cordes M."/>
            <person name="Harris A."/>
            <person name="Isak A."/>
            <person name="van Brunt A."/>
            <person name="Nguyen C."/>
            <person name="Du F."/>
            <person name="Courtney L."/>
            <person name="Kalicki J."/>
            <person name="Ozersky P."/>
            <person name="Abbott S."/>
            <person name="Armstrong J."/>
            <person name="Belter E.A."/>
            <person name="Caruso L."/>
            <person name="Cedroni M."/>
            <person name="Cotton M."/>
            <person name="Davidson T."/>
            <person name="Desai A."/>
            <person name="Elliott G."/>
            <person name="Erb T."/>
            <person name="Fronick C."/>
            <person name="Gaige T."/>
            <person name="Haakenson W."/>
            <person name="Haglund K."/>
            <person name="Holmes A."/>
            <person name="Harkins R."/>
            <person name="Kim K."/>
            <person name="Kruchowski S.S."/>
            <person name="Strong C.M."/>
            <person name="Grewal N."/>
            <person name="Goyea E."/>
            <person name="Hou S."/>
            <person name="Levy A."/>
            <person name="Martinka S."/>
            <person name="Mead K."/>
            <person name="McLellan M.D."/>
            <person name="Meyer R."/>
            <person name="Randall-Maher J."/>
            <person name="Tomlinson C."/>
            <person name="Dauphin-Kohlberg S."/>
            <person name="Kozlowicz-Reilly A."/>
            <person name="Shah N."/>
            <person name="Swearengen-Shahid S."/>
            <person name="Snider J."/>
            <person name="Strong J.T."/>
            <person name="Thompson J."/>
            <person name="Yoakum M."/>
            <person name="Leonard S."/>
            <person name="Pearman C."/>
            <person name="Trani L."/>
            <person name="Radionenko M."/>
            <person name="Waligorski J.E."/>
            <person name="Wang C."/>
            <person name="Rock S.M."/>
            <person name="Tin-Wollam A.-M."/>
            <person name="Maupin R."/>
            <person name="Latreille P."/>
            <person name="Wendl M.C."/>
            <person name="Yang S.-P."/>
            <person name="Pohl C."/>
            <person name="Wallis J.W."/>
            <person name="Spieth J."/>
            <person name="Bieri T.A."/>
            <person name="Berkowicz N."/>
            <person name="Nelson J.O."/>
            <person name="Osborne J."/>
            <person name="Ding L."/>
            <person name="Meyer R."/>
            <person name="Sabo A."/>
            <person name="Shotland Y."/>
            <person name="Sinha P."/>
            <person name="Wohldmann P.E."/>
            <person name="Cook L.L."/>
            <person name="Hickenbotham M.T."/>
            <person name="Eldred J."/>
            <person name="Williams D."/>
            <person name="Jones T.A."/>
            <person name="She X."/>
            <person name="Ciccarelli F.D."/>
            <person name="Izaurralde E."/>
            <person name="Taylor J."/>
            <person name="Schmutz J."/>
            <person name="Myers R.M."/>
            <person name="Cox D.R."/>
            <person name="Huang X."/>
            <person name="McPherson J.D."/>
            <person name="Mardis E.R."/>
            <person name="Clifton S.W."/>
            <person name="Warren W.C."/>
            <person name="Chinwalla A.T."/>
            <person name="Eddy S.R."/>
            <person name="Marra M.A."/>
            <person name="Ovcharenko I."/>
            <person name="Furey T.S."/>
            <person name="Miller W."/>
            <person name="Eichler E.E."/>
            <person name="Bork P."/>
            <person name="Suyama M."/>
            <person name="Torrents D."/>
            <person name="Waterston R.H."/>
            <person name="Wilson R.K."/>
        </authorList>
    </citation>
    <scope>NUCLEOTIDE SEQUENCE [LARGE SCALE GENOMIC DNA]</scope>
</reference>
<reference key="6">
    <citation type="journal article" date="2004" name="Genome Res.">
        <title>The status, quality, and expansion of the NIH full-length cDNA project: the Mammalian Gene Collection (MGC).</title>
        <authorList>
            <consortium name="The MGC Project Team"/>
        </authorList>
    </citation>
    <scope>NUCLEOTIDE SEQUENCE [LARGE SCALE MRNA]</scope>
    <source>
        <tissue>Brain</tissue>
    </source>
</reference>
<reference key="7">
    <citation type="journal article" date="2006" name="Cell">
        <title>Global, in vivo, and site-specific phosphorylation dynamics in signaling networks.</title>
        <authorList>
            <person name="Olsen J.V."/>
            <person name="Blagoev B."/>
            <person name="Gnad F."/>
            <person name="Macek B."/>
            <person name="Kumar C."/>
            <person name="Mortensen P."/>
            <person name="Mann M."/>
        </authorList>
    </citation>
    <scope>PHOSPHORYLATION [LARGE SCALE ANALYSIS] AT SER-63</scope>
    <scope>IDENTIFICATION BY MASS SPECTROMETRY [LARGE SCALE ANALYSIS]</scope>
    <source>
        <tissue>Cervix carcinoma</tissue>
    </source>
</reference>
<reference key="8">
    <citation type="journal article" date="2013" name="J. Proteome Res.">
        <title>Toward a comprehensive characterization of a human cancer cell phosphoproteome.</title>
        <authorList>
            <person name="Zhou H."/>
            <person name="Di Palma S."/>
            <person name="Preisinger C."/>
            <person name="Peng M."/>
            <person name="Polat A.N."/>
            <person name="Heck A.J."/>
            <person name="Mohammed S."/>
        </authorList>
    </citation>
    <scope>PHOSPHORYLATION [LARGE SCALE ANALYSIS] AT SER-63</scope>
    <scope>IDENTIFICATION BY MASS SPECTROMETRY [LARGE SCALE ANALYSIS]</scope>
    <source>
        <tissue>Erythroleukemia</tissue>
    </source>
</reference>
<comment type="function">
    <text evidence="3">Transcriptional activator which may act in mitogen-activated protein kinase signaling pathway.</text>
</comment>
<comment type="subcellular location">
    <subcellularLocation>
        <location evidence="3">Nucleus</location>
    </subcellularLocation>
    <subcellularLocation>
        <location evidence="3">Cytoplasm</location>
    </subcellularLocation>
</comment>
<comment type="tissue specificity">
    <text evidence="3">Highly expressed in heart, and expressed at low levels in placenta, lung, skeletal muscle, kidney and liver.</text>
</comment>
<comment type="developmental stage">
    <text evidence="3">Expressed in heart of 25 and 17 weeks embryos.</text>
</comment>
<comment type="similarity">
    <text evidence="5">Belongs to the LBH family.</text>
</comment>
<evidence type="ECO:0000255" key="1"/>
<evidence type="ECO:0000256" key="2">
    <source>
        <dbReference type="SAM" id="MobiDB-lite"/>
    </source>
</evidence>
<evidence type="ECO:0000269" key="3">
    <source>
    </source>
</evidence>
<evidence type="ECO:0000303" key="4">
    <source>
    </source>
</evidence>
<evidence type="ECO:0000305" key="5"/>
<evidence type="ECO:0000312" key="6">
    <source>
        <dbReference type="HGNC" id="HGNC:29532"/>
    </source>
</evidence>
<evidence type="ECO:0007744" key="7">
    <source>
    </source>
</evidence>
<evidence type="ECO:0007744" key="8">
    <source>
    </source>
</evidence>
<gene>
    <name evidence="6" type="primary">LBH</name>
</gene>
<proteinExistence type="evidence at protein level"/>